<organism>
    <name type="scientific">Rickettsia peacockii (strain Rustic)</name>
    <dbReference type="NCBI Taxonomy" id="562019"/>
    <lineage>
        <taxon>Bacteria</taxon>
        <taxon>Pseudomonadati</taxon>
        <taxon>Pseudomonadota</taxon>
        <taxon>Alphaproteobacteria</taxon>
        <taxon>Rickettsiales</taxon>
        <taxon>Rickettsiaceae</taxon>
        <taxon>Rickettsieae</taxon>
        <taxon>Rickettsia</taxon>
        <taxon>spotted fever group</taxon>
    </lineage>
</organism>
<accession>C4K1V5</accession>
<sequence length="444" mass="49104">MRNIIYFILSLLFSVTSYALETINIEHGRADPTPIAVNKFDADNSAADVLGHDMVKVISNDLKLSGLFRPISAASFIEEKTGIEYKPLFAAWRQINASLLVNGEVTKLESGKFQISFILWDTLLEKQLVGEILEVPKNLWRRAAHKIADKIYEKITGDAGYFDTKIVYVSESSSLPKIKRIALMDYDGANNKYLTNGKSLVLTPRFARSADKIFYVSYATKRRVLVYEKDLKTGKESVVGDFPGISFAPRFSPDGRKAVMSIAKNGSTHIYEIDLATKRLHKLTDGFGINTSPSYSPDGKKIVYNSDRNGVPQLYIMNSDGSDVQRISFGGGSYAAPSWSPRGDYIAFTKITKGDGGKTFNIGIMKACPQDDKNSERIITSGYLVESPCWSPNGRVIMFAKGWPSSAKAPGKNKIFAIDLTGHNEREIMTPADASDPEWSGVLN</sequence>
<evidence type="ECO:0000255" key="1">
    <source>
        <dbReference type="HAMAP-Rule" id="MF_00671"/>
    </source>
</evidence>
<keyword id="KW-0131">Cell cycle</keyword>
<keyword id="KW-0132">Cell division</keyword>
<keyword id="KW-0574">Periplasm</keyword>
<keyword id="KW-0732">Signal</keyword>
<reference key="1">
    <citation type="journal article" date="2009" name="PLoS ONE">
        <title>Genome sequence of the endosymbiont Rickettsia peacockii and comparison with virulent Rickettsia rickettsii: identification of virulence factors.</title>
        <authorList>
            <person name="Felsheim R.F."/>
            <person name="Kurtti T.J."/>
            <person name="Munderloh U.G."/>
        </authorList>
    </citation>
    <scope>NUCLEOTIDE SEQUENCE [LARGE SCALE GENOMIC DNA]</scope>
    <source>
        <strain>Rustic</strain>
    </source>
</reference>
<dbReference type="EMBL" id="CP001227">
    <property type="protein sequence ID" value="ACR47555.1"/>
    <property type="molecule type" value="Genomic_DNA"/>
</dbReference>
<dbReference type="RefSeq" id="WP_012736777.1">
    <property type="nucleotide sequence ID" value="NC_012730.1"/>
</dbReference>
<dbReference type="SMR" id="C4K1V5"/>
<dbReference type="KEGG" id="rpk:RPR_04360"/>
<dbReference type="HOGENOM" id="CLU_047123_0_0_5"/>
<dbReference type="Proteomes" id="UP000005015">
    <property type="component" value="Chromosome"/>
</dbReference>
<dbReference type="GO" id="GO:0042597">
    <property type="term" value="C:periplasmic space"/>
    <property type="evidence" value="ECO:0007669"/>
    <property type="project" value="UniProtKB-SubCell"/>
</dbReference>
<dbReference type="GO" id="GO:0051301">
    <property type="term" value="P:cell division"/>
    <property type="evidence" value="ECO:0007669"/>
    <property type="project" value="UniProtKB-UniRule"/>
</dbReference>
<dbReference type="GO" id="GO:0017038">
    <property type="term" value="P:protein import"/>
    <property type="evidence" value="ECO:0007669"/>
    <property type="project" value="InterPro"/>
</dbReference>
<dbReference type="Gene3D" id="2.120.10.30">
    <property type="entry name" value="TolB, C-terminal domain"/>
    <property type="match status" value="1"/>
</dbReference>
<dbReference type="Gene3D" id="3.40.50.10070">
    <property type="entry name" value="TolB, N-terminal domain"/>
    <property type="match status" value="1"/>
</dbReference>
<dbReference type="HAMAP" id="MF_00671">
    <property type="entry name" value="TolB"/>
    <property type="match status" value="1"/>
</dbReference>
<dbReference type="InterPro" id="IPR011042">
    <property type="entry name" value="6-blade_b-propeller_TolB-like"/>
</dbReference>
<dbReference type="InterPro" id="IPR011659">
    <property type="entry name" value="PD40"/>
</dbReference>
<dbReference type="InterPro" id="IPR014167">
    <property type="entry name" value="Tol-Pal_TolB"/>
</dbReference>
<dbReference type="InterPro" id="IPR007195">
    <property type="entry name" value="TolB_N"/>
</dbReference>
<dbReference type="NCBIfam" id="TIGR02800">
    <property type="entry name" value="propeller_TolB"/>
    <property type="match status" value="1"/>
</dbReference>
<dbReference type="PANTHER" id="PTHR36842:SF1">
    <property type="entry name" value="PROTEIN TOLB"/>
    <property type="match status" value="1"/>
</dbReference>
<dbReference type="PANTHER" id="PTHR36842">
    <property type="entry name" value="PROTEIN TOLB HOMOLOG"/>
    <property type="match status" value="1"/>
</dbReference>
<dbReference type="Pfam" id="PF07676">
    <property type="entry name" value="PD40"/>
    <property type="match status" value="4"/>
</dbReference>
<dbReference type="Pfam" id="PF04052">
    <property type="entry name" value="TolB_N"/>
    <property type="match status" value="1"/>
</dbReference>
<dbReference type="SUPFAM" id="SSF52964">
    <property type="entry name" value="TolB, N-terminal domain"/>
    <property type="match status" value="1"/>
</dbReference>
<dbReference type="SUPFAM" id="SSF69304">
    <property type="entry name" value="Tricorn protease N-terminal domain"/>
    <property type="match status" value="1"/>
</dbReference>
<name>TOLB_RICPU</name>
<proteinExistence type="inferred from homology"/>
<comment type="function">
    <text evidence="1">Part of the Tol-Pal system, which plays a role in outer membrane invagination during cell division and is important for maintaining outer membrane integrity.</text>
</comment>
<comment type="subunit">
    <text evidence="1">The Tol-Pal system is composed of five core proteins: the inner membrane proteins TolA, TolQ and TolR, the periplasmic protein TolB and the outer membrane protein Pal. They form a network linking the inner and outer membranes and the peptidoglycan layer.</text>
</comment>
<comment type="subcellular location">
    <subcellularLocation>
        <location evidence="1">Periplasm</location>
    </subcellularLocation>
</comment>
<comment type="similarity">
    <text evidence="1">Belongs to the TolB family.</text>
</comment>
<gene>
    <name evidence="1" type="primary">tolB</name>
    <name type="ordered locus">RPR_04360</name>
</gene>
<feature type="signal peptide" evidence="1">
    <location>
        <begin position="1"/>
        <end position="19"/>
    </location>
</feature>
<feature type="chain" id="PRO_1000212511" description="Tol-Pal system protein TolB" evidence="1">
    <location>
        <begin position="20"/>
        <end position="444"/>
    </location>
</feature>
<protein>
    <recommendedName>
        <fullName evidence="1">Tol-Pal system protein TolB</fullName>
    </recommendedName>
</protein>